<name>FPG_RHOOB</name>
<protein>
    <recommendedName>
        <fullName evidence="2">Formamidopyrimidine-DNA glycosylase</fullName>
        <shortName evidence="2">Fapy-DNA glycosylase</shortName>
        <ecNumber evidence="2">3.2.2.23</ecNumber>
    </recommendedName>
    <alternativeName>
        <fullName evidence="2">DNA-(apurinic or apyrimidinic site) lyase MutM</fullName>
        <shortName evidence="2">AP lyase MutM</shortName>
        <ecNumber evidence="2">4.2.99.18</ecNumber>
    </alternativeName>
</protein>
<comment type="function">
    <text evidence="2">Involved in base excision repair of DNA damaged by oxidation or by mutagenic agents. Acts as a DNA glycosylase that recognizes and removes damaged bases. Has a preference for oxidized purines, such as 7,8-dihydro-8-oxoguanine (8-oxoG). Has AP (apurinic/apyrimidinic) lyase activity and introduces nicks in the DNA strand. Cleaves the DNA backbone by beta-delta elimination to generate a single-strand break at the site of the removed base with both 3'- and 5'-phosphates.</text>
</comment>
<comment type="catalytic activity">
    <reaction evidence="2">
        <text>Hydrolysis of DNA containing ring-opened 7-methylguanine residues, releasing 2,6-diamino-4-hydroxy-5-(N-methyl)formamidopyrimidine.</text>
        <dbReference type="EC" id="3.2.2.23"/>
    </reaction>
</comment>
<comment type="catalytic activity">
    <reaction evidence="2">
        <text>2'-deoxyribonucleotide-(2'-deoxyribose 5'-phosphate)-2'-deoxyribonucleotide-DNA = a 3'-end 2'-deoxyribonucleotide-(2,3-dehydro-2,3-deoxyribose 5'-phosphate)-DNA + a 5'-end 5'-phospho-2'-deoxyribonucleoside-DNA + H(+)</text>
        <dbReference type="Rhea" id="RHEA:66592"/>
        <dbReference type="Rhea" id="RHEA-COMP:13180"/>
        <dbReference type="Rhea" id="RHEA-COMP:16897"/>
        <dbReference type="Rhea" id="RHEA-COMP:17067"/>
        <dbReference type="ChEBI" id="CHEBI:15378"/>
        <dbReference type="ChEBI" id="CHEBI:136412"/>
        <dbReference type="ChEBI" id="CHEBI:157695"/>
        <dbReference type="ChEBI" id="CHEBI:167181"/>
        <dbReference type="EC" id="4.2.99.18"/>
    </reaction>
</comment>
<comment type="cofactor">
    <cofactor evidence="2">
        <name>Zn(2+)</name>
        <dbReference type="ChEBI" id="CHEBI:29105"/>
    </cofactor>
    <text evidence="2">Binds 1 zinc ion per subunit.</text>
</comment>
<comment type="subunit">
    <text evidence="2">Monomer.</text>
</comment>
<comment type="similarity">
    <text evidence="2">Belongs to the FPG family.</text>
</comment>
<accession>C1B2Q5</accession>
<feature type="initiator methionine" description="Removed" evidence="1">
    <location>
        <position position="1"/>
    </location>
</feature>
<feature type="chain" id="PRO_1000118899" description="Formamidopyrimidine-DNA glycosylase">
    <location>
        <begin position="2"/>
        <end position="289"/>
    </location>
</feature>
<feature type="zinc finger region" description="FPG-type" evidence="2">
    <location>
        <begin position="247"/>
        <end position="281"/>
    </location>
</feature>
<feature type="active site" description="Schiff-base intermediate with DNA" evidence="2">
    <location>
        <position position="2"/>
    </location>
</feature>
<feature type="active site" description="Proton donor" evidence="2">
    <location>
        <position position="3"/>
    </location>
</feature>
<feature type="active site" description="Proton donor; for beta-elimination activity" evidence="2">
    <location>
        <position position="61"/>
    </location>
</feature>
<feature type="active site" description="Proton donor; for delta-elimination activity" evidence="2">
    <location>
        <position position="271"/>
    </location>
</feature>
<feature type="binding site" evidence="2">
    <location>
        <position position="96"/>
    </location>
    <ligand>
        <name>DNA</name>
        <dbReference type="ChEBI" id="CHEBI:16991"/>
    </ligand>
</feature>
<feature type="binding site" evidence="2">
    <location>
        <position position="115"/>
    </location>
    <ligand>
        <name>DNA</name>
        <dbReference type="ChEBI" id="CHEBI:16991"/>
    </ligand>
</feature>
<feature type="binding site" evidence="2">
    <location>
        <position position="161"/>
    </location>
    <ligand>
        <name>DNA</name>
        <dbReference type="ChEBI" id="CHEBI:16991"/>
    </ligand>
</feature>
<proteinExistence type="inferred from homology"/>
<gene>
    <name evidence="2" type="primary">mutM</name>
    <name evidence="2" type="synonym">fpg</name>
    <name type="ordered locus">ROP_65750</name>
</gene>
<reference key="1">
    <citation type="submission" date="2009-03" db="EMBL/GenBank/DDBJ databases">
        <title>Comparison of the complete genome sequences of Rhodococcus erythropolis PR4 and Rhodococcus opacus B4.</title>
        <authorList>
            <person name="Takarada H."/>
            <person name="Sekine M."/>
            <person name="Hosoyama A."/>
            <person name="Yamada R."/>
            <person name="Fujisawa T."/>
            <person name="Omata S."/>
            <person name="Shimizu A."/>
            <person name="Tsukatani N."/>
            <person name="Tanikawa S."/>
            <person name="Fujita N."/>
            <person name="Harayama S."/>
        </authorList>
    </citation>
    <scope>NUCLEOTIDE SEQUENCE [LARGE SCALE GENOMIC DNA]</scope>
    <source>
        <strain>B4</strain>
    </source>
</reference>
<dbReference type="EC" id="3.2.2.23" evidence="2"/>
<dbReference type="EC" id="4.2.99.18" evidence="2"/>
<dbReference type="EMBL" id="AP011115">
    <property type="protein sequence ID" value="BAH54822.1"/>
    <property type="molecule type" value="Genomic_DNA"/>
</dbReference>
<dbReference type="RefSeq" id="WP_015890266.1">
    <property type="nucleotide sequence ID" value="NC_012522.1"/>
</dbReference>
<dbReference type="SMR" id="C1B2Q5"/>
<dbReference type="STRING" id="632772.ROP_65750"/>
<dbReference type="KEGG" id="rop:ROP_65750"/>
<dbReference type="PATRIC" id="fig|632772.20.peg.6861"/>
<dbReference type="HOGENOM" id="CLU_038423_1_2_11"/>
<dbReference type="OrthoDB" id="9800855at2"/>
<dbReference type="Proteomes" id="UP000002212">
    <property type="component" value="Chromosome"/>
</dbReference>
<dbReference type="GO" id="GO:0034039">
    <property type="term" value="F:8-oxo-7,8-dihydroguanine DNA N-glycosylase activity"/>
    <property type="evidence" value="ECO:0007669"/>
    <property type="project" value="TreeGrafter"/>
</dbReference>
<dbReference type="GO" id="GO:0140078">
    <property type="term" value="F:class I DNA-(apurinic or apyrimidinic site) endonuclease activity"/>
    <property type="evidence" value="ECO:0007669"/>
    <property type="project" value="UniProtKB-EC"/>
</dbReference>
<dbReference type="GO" id="GO:0003684">
    <property type="term" value="F:damaged DNA binding"/>
    <property type="evidence" value="ECO:0007669"/>
    <property type="project" value="InterPro"/>
</dbReference>
<dbReference type="GO" id="GO:0008270">
    <property type="term" value="F:zinc ion binding"/>
    <property type="evidence" value="ECO:0007669"/>
    <property type="project" value="UniProtKB-UniRule"/>
</dbReference>
<dbReference type="GO" id="GO:0006284">
    <property type="term" value="P:base-excision repair"/>
    <property type="evidence" value="ECO:0007669"/>
    <property type="project" value="InterPro"/>
</dbReference>
<dbReference type="CDD" id="cd08966">
    <property type="entry name" value="EcFpg-like_N"/>
    <property type="match status" value="1"/>
</dbReference>
<dbReference type="FunFam" id="1.10.8.50:FF:000003">
    <property type="entry name" value="Formamidopyrimidine-DNA glycosylase"/>
    <property type="match status" value="1"/>
</dbReference>
<dbReference type="FunFam" id="3.20.190.10:FF:000006">
    <property type="entry name" value="Formamidopyrimidine-DNA glycosylase"/>
    <property type="match status" value="1"/>
</dbReference>
<dbReference type="Gene3D" id="1.10.8.50">
    <property type="match status" value="1"/>
</dbReference>
<dbReference type="Gene3D" id="3.20.190.10">
    <property type="entry name" value="MutM-like, N-terminal"/>
    <property type="match status" value="1"/>
</dbReference>
<dbReference type="HAMAP" id="MF_00103">
    <property type="entry name" value="Fapy_DNA_glycosyl"/>
    <property type="match status" value="1"/>
</dbReference>
<dbReference type="InterPro" id="IPR015886">
    <property type="entry name" value="DNA_glyclase/AP_lyase_DNA-bd"/>
</dbReference>
<dbReference type="InterPro" id="IPR020629">
    <property type="entry name" value="Formamido-pyr_DNA_Glyclase"/>
</dbReference>
<dbReference type="InterPro" id="IPR012319">
    <property type="entry name" value="FPG_cat"/>
</dbReference>
<dbReference type="InterPro" id="IPR035937">
    <property type="entry name" value="MutM-like_N-ter"/>
</dbReference>
<dbReference type="InterPro" id="IPR010979">
    <property type="entry name" value="Ribosomal_uS13-like_H2TH"/>
</dbReference>
<dbReference type="InterPro" id="IPR000214">
    <property type="entry name" value="Znf_DNA_glyclase/AP_lyase"/>
</dbReference>
<dbReference type="InterPro" id="IPR010663">
    <property type="entry name" value="Znf_FPG/IleRS"/>
</dbReference>
<dbReference type="NCBIfam" id="TIGR00577">
    <property type="entry name" value="fpg"/>
    <property type="match status" value="1"/>
</dbReference>
<dbReference type="NCBIfam" id="NF002211">
    <property type="entry name" value="PRK01103.1"/>
    <property type="match status" value="1"/>
</dbReference>
<dbReference type="PANTHER" id="PTHR22993">
    <property type="entry name" value="FORMAMIDOPYRIMIDINE-DNA GLYCOSYLASE"/>
    <property type="match status" value="1"/>
</dbReference>
<dbReference type="PANTHER" id="PTHR22993:SF9">
    <property type="entry name" value="FORMAMIDOPYRIMIDINE-DNA GLYCOSYLASE"/>
    <property type="match status" value="1"/>
</dbReference>
<dbReference type="Pfam" id="PF01149">
    <property type="entry name" value="Fapy_DNA_glyco"/>
    <property type="match status" value="1"/>
</dbReference>
<dbReference type="Pfam" id="PF06831">
    <property type="entry name" value="H2TH"/>
    <property type="match status" value="1"/>
</dbReference>
<dbReference type="Pfam" id="PF06827">
    <property type="entry name" value="zf-FPG_IleRS"/>
    <property type="match status" value="1"/>
</dbReference>
<dbReference type="SMART" id="SM00898">
    <property type="entry name" value="Fapy_DNA_glyco"/>
    <property type="match status" value="1"/>
</dbReference>
<dbReference type="SMART" id="SM01232">
    <property type="entry name" value="H2TH"/>
    <property type="match status" value="1"/>
</dbReference>
<dbReference type="SUPFAM" id="SSF57716">
    <property type="entry name" value="Glucocorticoid receptor-like (DNA-binding domain)"/>
    <property type="match status" value="1"/>
</dbReference>
<dbReference type="SUPFAM" id="SSF81624">
    <property type="entry name" value="N-terminal domain of MutM-like DNA repair proteins"/>
    <property type="match status" value="1"/>
</dbReference>
<dbReference type="SUPFAM" id="SSF46946">
    <property type="entry name" value="S13-like H2TH domain"/>
    <property type="match status" value="1"/>
</dbReference>
<dbReference type="PROSITE" id="PS51068">
    <property type="entry name" value="FPG_CAT"/>
    <property type="match status" value="1"/>
</dbReference>
<dbReference type="PROSITE" id="PS51066">
    <property type="entry name" value="ZF_FPG_2"/>
    <property type="match status" value="1"/>
</dbReference>
<keyword id="KW-0227">DNA damage</keyword>
<keyword id="KW-0234">DNA repair</keyword>
<keyword id="KW-0238">DNA-binding</keyword>
<keyword id="KW-0326">Glycosidase</keyword>
<keyword id="KW-0378">Hydrolase</keyword>
<keyword id="KW-0456">Lyase</keyword>
<keyword id="KW-0479">Metal-binding</keyword>
<keyword id="KW-0511">Multifunctional enzyme</keyword>
<keyword id="KW-0862">Zinc</keyword>
<keyword id="KW-0863">Zinc-finger</keyword>
<evidence type="ECO:0000250" key="1"/>
<evidence type="ECO:0000255" key="2">
    <source>
        <dbReference type="HAMAP-Rule" id="MF_00103"/>
    </source>
</evidence>
<sequence>MPELPEVEVVRRGLERHIVGASIDSVDILHPRAIRRHLPGAADLAGQLTGERIAGADRRGKYLWLVLEPSTVALVVHLGMSGQMLVQPPELPTEKHLRIRARLDSGLDLRFVDQRTFGGWALAPLVEVDGSLVPDSVAHIARDPLDSRFDLAATVKVVRGKHSEIKRVLLDQTVVSGIGNIYADEALWRAQIHGNRLTDRLTGPRIGAVLTAAQQVMREALSQGGTSFDALYVNVNGESGYFDRSLSAYGQEDRPCPRCGTAIRREKFMNRSSFSCPKCQRAPRRSPAR</sequence>
<organism>
    <name type="scientific">Rhodococcus opacus (strain B4)</name>
    <dbReference type="NCBI Taxonomy" id="632772"/>
    <lineage>
        <taxon>Bacteria</taxon>
        <taxon>Bacillati</taxon>
        <taxon>Actinomycetota</taxon>
        <taxon>Actinomycetes</taxon>
        <taxon>Mycobacteriales</taxon>
        <taxon>Nocardiaceae</taxon>
        <taxon>Rhodococcus</taxon>
    </lineage>
</organism>